<gene>
    <name type="primary">sarS</name>
    <name type="synonym">sarH1</name>
    <name type="ordered locus">SAHV_0111</name>
</gene>
<protein>
    <recommendedName>
        <fullName>HTH-type transcriptional regulator SarS</fullName>
    </recommendedName>
    <alternativeName>
        <fullName>Staphylococcal accessory regulator S</fullName>
    </alternativeName>
</protein>
<proteinExistence type="evidence at protein level"/>
<comment type="function">
    <text evidence="1">Transcriptional regulator that controls expression of some virulence factors in a cell density-dependent manner.</text>
</comment>
<comment type="subcellular location">
    <subcellularLocation>
        <location evidence="1">Cytoplasm</location>
    </subcellularLocation>
</comment>
<comment type="similarity">
    <text evidence="3">Belongs to the SarA family.</text>
</comment>
<dbReference type="EMBL" id="AB035454">
    <property type="protein sequence ID" value="BAB03341.1"/>
    <property type="molecule type" value="Genomic_DNA"/>
</dbReference>
<dbReference type="EMBL" id="AP009324">
    <property type="protein sequence ID" value="BAF76994.1"/>
    <property type="molecule type" value="Genomic_DNA"/>
</dbReference>
<dbReference type="RefSeq" id="WP_000876756.1">
    <property type="nucleotide sequence ID" value="NC_009782.1"/>
</dbReference>
<dbReference type="PDB" id="1P4X">
    <property type="method" value="X-ray"/>
    <property type="resolution" value="2.20 A"/>
    <property type="chains" value="A=1-250"/>
</dbReference>
<dbReference type="PDBsum" id="1P4X"/>
<dbReference type="SMR" id="P0C0R2"/>
<dbReference type="KEGG" id="saw:SAHV_0111"/>
<dbReference type="HOGENOM" id="CLU_097164_0_0_9"/>
<dbReference type="GO" id="GO:0005737">
    <property type="term" value="C:cytoplasm"/>
    <property type="evidence" value="ECO:0007669"/>
    <property type="project" value="UniProtKB-SubCell"/>
</dbReference>
<dbReference type="GO" id="GO:0003677">
    <property type="term" value="F:DNA binding"/>
    <property type="evidence" value="ECO:0007669"/>
    <property type="project" value="UniProtKB-KW"/>
</dbReference>
<dbReference type="GO" id="GO:0003700">
    <property type="term" value="F:DNA-binding transcription factor activity"/>
    <property type="evidence" value="ECO:0007669"/>
    <property type="project" value="InterPro"/>
</dbReference>
<dbReference type="GO" id="GO:0006950">
    <property type="term" value="P:response to stress"/>
    <property type="evidence" value="ECO:0007669"/>
    <property type="project" value="TreeGrafter"/>
</dbReference>
<dbReference type="Gene3D" id="1.10.10.10">
    <property type="entry name" value="Winged helix-like DNA-binding domain superfamily/Winged helix DNA-binding domain"/>
    <property type="match status" value="2"/>
</dbReference>
<dbReference type="InterPro" id="IPR000835">
    <property type="entry name" value="HTH_MarR-typ"/>
</dbReference>
<dbReference type="InterPro" id="IPR039422">
    <property type="entry name" value="MarR/SlyA-like"/>
</dbReference>
<dbReference type="InterPro" id="IPR010166">
    <property type="entry name" value="SarA/Rot_dom"/>
</dbReference>
<dbReference type="InterPro" id="IPR055166">
    <property type="entry name" value="Transc_reg_Sar_Rot_HTH"/>
</dbReference>
<dbReference type="InterPro" id="IPR036388">
    <property type="entry name" value="WH-like_DNA-bd_sf"/>
</dbReference>
<dbReference type="InterPro" id="IPR036390">
    <property type="entry name" value="WH_DNA-bd_sf"/>
</dbReference>
<dbReference type="NCBIfam" id="TIGR01889">
    <property type="entry name" value="Staph_reg_Sar"/>
    <property type="match status" value="2"/>
</dbReference>
<dbReference type="PANTHER" id="PTHR33164:SF5">
    <property type="entry name" value="ORGANIC HYDROPEROXIDE RESISTANCE TRANSCRIPTIONAL REGULATOR"/>
    <property type="match status" value="1"/>
</dbReference>
<dbReference type="PANTHER" id="PTHR33164">
    <property type="entry name" value="TRANSCRIPTIONAL REGULATOR, MARR FAMILY"/>
    <property type="match status" value="1"/>
</dbReference>
<dbReference type="Pfam" id="PF22381">
    <property type="entry name" value="Staph_reg_Sar_Rot"/>
    <property type="match status" value="2"/>
</dbReference>
<dbReference type="SMART" id="SM00347">
    <property type="entry name" value="HTH_MARR"/>
    <property type="match status" value="2"/>
</dbReference>
<dbReference type="SUPFAM" id="SSF46785">
    <property type="entry name" value="Winged helix' DNA-binding domain"/>
    <property type="match status" value="2"/>
</dbReference>
<organism>
    <name type="scientific">Staphylococcus aureus (strain Mu3 / ATCC 700698)</name>
    <dbReference type="NCBI Taxonomy" id="418127"/>
    <lineage>
        <taxon>Bacteria</taxon>
        <taxon>Bacillati</taxon>
        <taxon>Bacillota</taxon>
        <taxon>Bacilli</taxon>
        <taxon>Bacillales</taxon>
        <taxon>Staphylococcaceae</taxon>
        <taxon>Staphylococcus</taxon>
    </lineage>
</organism>
<name>SARS_STAA1</name>
<sequence>MKYNNHDKIRDFIIIEAYMFRFKKKVKPEVDMTIKEFILLTYLFHQQENTLPFKKIVSDLCYKQSDLVQHIKVLVKHSYISKVRSKIDERNTYISISEEQREKIAERVTLFDQIIKQFNLADQSESQMIPKDSKEFLNLMMYTMYFKNIIKKHLTLSFVEFTILAIITSQNKNIVLLKDLIETIHHKYPQTVRALNNLKKQGYLIKERSTEDERKILIHMDDAQQDHAEQLLAQVNQLLADKDHLHLVFE</sequence>
<accession>P0C0R2</accession>
<accession>A7WX61</accession>
<accession>Q9KWJ2</accession>
<reference key="1">
    <citation type="journal article" date="2000" name="Biochem. Biophys. Res. Commun.">
        <title>Identification of the up- and down-regulated genes in vancomycin-resistant Staphylococcus aureus strains Mu3 and Mu50 by cDNA differential hybridization method.</title>
        <authorList>
            <person name="Kuroda M."/>
            <person name="Kuwahara-Arai K."/>
            <person name="Hiramatsu K."/>
        </authorList>
    </citation>
    <scope>NUCLEOTIDE SEQUENCE [GENOMIC DNA]</scope>
</reference>
<reference key="2">
    <citation type="journal article" date="2008" name="Antimicrob. Agents Chemother.">
        <title>Mutated response regulator graR is responsible for phenotypic conversion of Staphylococcus aureus from heterogeneous vancomycin-intermediate resistance to vancomycin-intermediate resistance.</title>
        <authorList>
            <person name="Neoh H.-M."/>
            <person name="Cui L."/>
            <person name="Yuzawa H."/>
            <person name="Takeuchi F."/>
            <person name="Matsuo M."/>
            <person name="Hiramatsu K."/>
        </authorList>
    </citation>
    <scope>NUCLEOTIDE SEQUENCE [LARGE SCALE GENOMIC DNA]</scope>
    <source>
        <strain>Mu3 / ATCC 700698</strain>
    </source>
</reference>
<keyword id="KW-0002">3D-structure</keyword>
<keyword id="KW-0010">Activator</keyword>
<keyword id="KW-0963">Cytoplasm</keyword>
<keyword id="KW-0238">DNA-binding</keyword>
<keyword id="KW-0677">Repeat</keyword>
<keyword id="KW-0678">Repressor</keyword>
<keyword id="KW-0804">Transcription</keyword>
<keyword id="KW-0805">Transcription regulation</keyword>
<keyword id="KW-0843">Virulence</keyword>
<evidence type="ECO:0000250" key="1"/>
<evidence type="ECO:0000255" key="2"/>
<evidence type="ECO:0000305" key="3"/>
<feature type="chain" id="PRO_0000219590" description="HTH-type transcriptional regulator SarS">
    <location>
        <begin position="1"/>
        <end position="250"/>
    </location>
</feature>
<feature type="DNA-binding region" description="H-T-H motif" evidence="2">
    <location>
        <begin position="53"/>
        <end position="76"/>
    </location>
</feature>
<feature type="DNA-binding region" description="H-T-H motif" evidence="2">
    <location>
        <begin position="177"/>
        <end position="200"/>
    </location>
</feature>